<reference key="1">
    <citation type="journal article" date="2001" name="Lancet">
        <title>Whole genome sequencing of meticillin-resistant Staphylococcus aureus.</title>
        <authorList>
            <person name="Kuroda M."/>
            <person name="Ohta T."/>
            <person name="Uchiyama I."/>
            <person name="Baba T."/>
            <person name="Yuzawa H."/>
            <person name="Kobayashi I."/>
            <person name="Cui L."/>
            <person name="Oguchi A."/>
            <person name="Aoki K."/>
            <person name="Nagai Y."/>
            <person name="Lian J.-Q."/>
            <person name="Ito T."/>
            <person name="Kanamori M."/>
            <person name="Matsumaru H."/>
            <person name="Maruyama A."/>
            <person name="Murakami H."/>
            <person name="Hosoyama A."/>
            <person name="Mizutani-Ui Y."/>
            <person name="Takahashi N.K."/>
            <person name="Sawano T."/>
            <person name="Inoue R."/>
            <person name="Kaito C."/>
            <person name="Sekimizu K."/>
            <person name="Hirakawa H."/>
            <person name="Kuhara S."/>
            <person name="Goto S."/>
            <person name="Yabuzaki J."/>
            <person name="Kanehisa M."/>
            <person name="Yamashita A."/>
            <person name="Oshima K."/>
            <person name="Furuya K."/>
            <person name="Yoshino C."/>
            <person name="Shiba T."/>
            <person name="Hattori M."/>
            <person name="Ogasawara N."/>
            <person name="Hayashi H."/>
            <person name="Hiramatsu K."/>
        </authorList>
    </citation>
    <scope>NUCLEOTIDE SEQUENCE [LARGE SCALE GENOMIC DNA]</scope>
    <source>
        <strain>Mu50 / ATCC 700699</strain>
    </source>
</reference>
<feature type="chain" id="PRO_0000082897" description="Peptide deformylase-like">
    <location>
        <begin position="1"/>
        <end position="162"/>
    </location>
</feature>
<dbReference type="EMBL" id="BA000017">
    <property type="protein sequence ID" value="BAB57377.1"/>
    <property type="molecule type" value="Genomic_DNA"/>
</dbReference>
<dbReference type="RefSeq" id="WP_000985293.1">
    <property type="nucleotide sequence ID" value="NC_002758.2"/>
</dbReference>
<dbReference type="SMR" id="P63921"/>
<dbReference type="KEGG" id="sav:SAV1215"/>
<dbReference type="HOGENOM" id="CLU_061901_4_1_9"/>
<dbReference type="PhylomeDB" id="P63921"/>
<dbReference type="Proteomes" id="UP000002481">
    <property type="component" value="Chromosome"/>
</dbReference>
<dbReference type="GO" id="GO:0042586">
    <property type="term" value="F:peptide deformylase activity"/>
    <property type="evidence" value="ECO:0007669"/>
    <property type="project" value="UniProtKB-UniRule"/>
</dbReference>
<dbReference type="GO" id="GO:0043686">
    <property type="term" value="P:co-translational protein modification"/>
    <property type="evidence" value="ECO:0007669"/>
    <property type="project" value="TreeGrafter"/>
</dbReference>
<dbReference type="GO" id="GO:0006412">
    <property type="term" value="P:translation"/>
    <property type="evidence" value="ECO:0007669"/>
    <property type="project" value="UniProtKB-UniRule"/>
</dbReference>
<dbReference type="CDD" id="cd00487">
    <property type="entry name" value="Pep_deformylase"/>
    <property type="match status" value="1"/>
</dbReference>
<dbReference type="FunFam" id="3.90.45.10:FF:000010">
    <property type="entry name" value="Peptide deformylase"/>
    <property type="match status" value="1"/>
</dbReference>
<dbReference type="Gene3D" id="3.90.45.10">
    <property type="entry name" value="Peptide deformylase"/>
    <property type="match status" value="1"/>
</dbReference>
<dbReference type="HAMAP" id="MF_00163">
    <property type="entry name" value="Pep_deformylase"/>
    <property type="match status" value="1"/>
</dbReference>
<dbReference type="InterPro" id="IPR023635">
    <property type="entry name" value="Peptide_deformylase"/>
</dbReference>
<dbReference type="InterPro" id="IPR036821">
    <property type="entry name" value="Peptide_deformylase_sf"/>
</dbReference>
<dbReference type="NCBIfam" id="TIGR00079">
    <property type="entry name" value="pept_deformyl"/>
    <property type="match status" value="1"/>
</dbReference>
<dbReference type="NCBIfam" id="NF011189">
    <property type="entry name" value="PRK14595.1"/>
    <property type="match status" value="1"/>
</dbReference>
<dbReference type="PANTHER" id="PTHR10458">
    <property type="entry name" value="PEPTIDE DEFORMYLASE"/>
    <property type="match status" value="1"/>
</dbReference>
<dbReference type="PANTHER" id="PTHR10458:SF22">
    <property type="entry name" value="PEPTIDE DEFORMYLASE"/>
    <property type="match status" value="1"/>
</dbReference>
<dbReference type="Pfam" id="PF01327">
    <property type="entry name" value="Pep_deformylase"/>
    <property type="match status" value="1"/>
</dbReference>
<dbReference type="PIRSF" id="PIRSF004749">
    <property type="entry name" value="Pep_def"/>
    <property type="match status" value="1"/>
</dbReference>
<dbReference type="PRINTS" id="PR01576">
    <property type="entry name" value="PDEFORMYLASE"/>
</dbReference>
<dbReference type="SUPFAM" id="SSF56420">
    <property type="entry name" value="Peptide deformylase"/>
    <property type="match status" value="1"/>
</dbReference>
<comment type="similarity">
    <text evidence="1">Belongs to the polypeptide deformylase family.</text>
</comment>
<sequence length="162" mass="18102">MAIKKLVPASHPILTKKAQAVKTFDDSLKRLLQDLEDTMYAQEAAGLCAPQINQSLQVAIIDMEMEGLLQLVNPKIISQSNETITDLEGSITLPDVYGEVTRSKMIVVESYDVNGNKVELTAHEDVARMILHIIDQMNGIPFTERADRILTDKEVEAYFIND</sequence>
<gene>
    <name type="ordered locus">SAV1215</name>
</gene>
<evidence type="ECO:0000255" key="1">
    <source>
        <dbReference type="HAMAP-Rule" id="MF_00163"/>
    </source>
</evidence>
<accession>P63921</accession>
<accession>Q99UQ3</accession>
<name>DEFL_STAAM</name>
<organism>
    <name type="scientific">Staphylococcus aureus (strain Mu50 / ATCC 700699)</name>
    <dbReference type="NCBI Taxonomy" id="158878"/>
    <lineage>
        <taxon>Bacteria</taxon>
        <taxon>Bacillati</taxon>
        <taxon>Bacillota</taxon>
        <taxon>Bacilli</taxon>
        <taxon>Bacillales</taxon>
        <taxon>Staphylococcaceae</taxon>
        <taxon>Staphylococcus</taxon>
    </lineage>
</organism>
<proteinExistence type="inferred from homology"/>
<protein>
    <recommendedName>
        <fullName evidence="1">Peptide deformylase-like</fullName>
    </recommendedName>
    <alternativeName>
        <fullName evidence="1">Polypeptide deformylase-like</fullName>
    </alternativeName>
</protein>